<protein>
    <recommendedName>
        <fullName evidence="1">Homogentisate 1,2-dioxygenase</fullName>
        <shortName evidence="1">HGDO</shortName>
        <ecNumber evidence="1">1.13.11.5</ecNumber>
    </recommendedName>
    <alternativeName>
        <fullName evidence="1">Homogentisate oxygenase</fullName>
    </alternativeName>
    <alternativeName>
        <fullName evidence="1">Homogentisic acid oxidase</fullName>
    </alternativeName>
    <alternativeName>
        <fullName evidence="1">Homogentisicase</fullName>
    </alternativeName>
</protein>
<organism>
    <name type="scientific">Pseudomonas syringae pv. tomato (strain ATCC BAA-871 / DC3000)</name>
    <dbReference type="NCBI Taxonomy" id="223283"/>
    <lineage>
        <taxon>Bacteria</taxon>
        <taxon>Pseudomonadati</taxon>
        <taxon>Pseudomonadota</taxon>
        <taxon>Gammaproteobacteria</taxon>
        <taxon>Pseudomonadales</taxon>
        <taxon>Pseudomonadaceae</taxon>
        <taxon>Pseudomonas</taxon>
    </lineage>
</organism>
<proteinExistence type="inferred from homology"/>
<sequence length="434" mass="48141">MAIHSSFEALAYQSGFANQFSSEALPGALPMGQNSPQKHPLGLYAEQFSGTAFTVARNEARRTWLYRIKPSAAHPRYQRMDRQITGREQGPINPNRLRWNAFDIPAEPVDFIDGLIALASTSAADQAEGVSVYVYAANTSMQRAFFSADGEWLIVPQQGRLRIITEMGVLDIGPLEIAVLPRGLKFSVQLLDGSARGYLCENHGGVLRLPELGPIGSNGLANPRDFLTPVAWFEERDEPVQLVQKFLGELWTTQLQHSPFDVVGWHGNNVPYTYDLRRFNTIGTVSYDHPDPSIFTVLTSPGAVHGQANIDFVIFPPRWMVAENTFRPPWFHRNLMNEFMGLIDGAYDAKAEGFMPGGSSLHNCMSAHGPDNITAEKAIAADLKPHKIENTMAFMFETGKVLRPSLHALACPQLQADYDACWNGMARTFNKESS</sequence>
<accession>Q87Z79</accession>
<dbReference type="EC" id="1.13.11.5" evidence="1"/>
<dbReference type="EMBL" id="AE016853">
    <property type="protein sequence ID" value="AAO57026.1"/>
    <property type="molecule type" value="Genomic_DNA"/>
</dbReference>
<dbReference type="RefSeq" id="NP_793331.1">
    <property type="nucleotide sequence ID" value="NC_004578.1"/>
</dbReference>
<dbReference type="RefSeq" id="WP_011104606.1">
    <property type="nucleotide sequence ID" value="NC_004578.1"/>
</dbReference>
<dbReference type="SMR" id="Q87Z79"/>
<dbReference type="STRING" id="223283.PSPTO_3551"/>
<dbReference type="GeneID" id="1185216"/>
<dbReference type="KEGG" id="pst:PSPTO_3551"/>
<dbReference type="PATRIC" id="fig|223283.9.peg.3640"/>
<dbReference type="eggNOG" id="COG3508">
    <property type="taxonomic scope" value="Bacteria"/>
</dbReference>
<dbReference type="HOGENOM" id="CLU_027174_0_0_6"/>
<dbReference type="OrthoDB" id="9811253at2"/>
<dbReference type="PhylomeDB" id="Q87Z79"/>
<dbReference type="UniPathway" id="UPA00139">
    <property type="reaction ID" value="UER00339"/>
</dbReference>
<dbReference type="Proteomes" id="UP000002515">
    <property type="component" value="Chromosome"/>
</dbReference>
<dbReference type="GO" id="GO:0005737">
    <property type="term" value="C:cytoplasm"/>
    <property type="evidence" value="ECO:0007669"/>
    <property type="project" value="TreeGrafter"/>
</dbReference>
<dbReference type="GO" id="GO:0004411">
    <property type="term" value="F:homogentisate 1,2-dioxygenase activity"/>
    <property type="evidence" value="ECO:0007669"/>
    <property type="project" value="UniProtKB-UniRule"/>
</dbReference>
<dbReference type="GO" id="GO:0005506">
    <property type="term" value="F:iron ion binding"/>
    <property type="evidence" value="ECO:0007669"/>
    <property type="project" value="UniProtKB-UniRule"/>
</dbReference>
<dbReference type="GO" id="GO:0006559">
    <property type="term" value="P:L-phenylalanine catabolic process"/>
    <property type="evidence" value="ECO:0007669"/>
    <property type="project" value="UniProtKB-UniRule"/>
</dbReference>
<dbReference type="GO" id="GO:0006572">
    <property type="term" value="P:tyrosine catabolic process"/>
    <property type="evidence" value="ECO:0007669"/>
    <property type="project" value="UniProtKB-UniRule"/>
</dbReference>
<dbReference type="CDD" id="cd07000">
    <property type="entry name" value="cupin_HGO_N"/>
    <property type="match status" value="1"/>
</dbReference>
<dbReference type="FunFam" id="2.60.120.10:FF:000036">
    <property type="entry name" value="Homogentisate 1,2-dioxygenase"/>
    <property type="match status" value="1"/>
</dbReference>
<dbReference type="Gene3D" id="2.60.120.10">
    <property type="entry name" value="Jelly Rolls"/>
    <property type="match status" value="1"/>
</dbReference>
<dbReference type="HAMAP" id="MF_00334">
    <property type="entry name" value="Homogentis_dioxygen"/>
    <property type="match status" value="1"/>
</dbReference>
<dbReference type="InterPro" id="IPR046451">
    <property type="entry name" value="HgmA_C"/>
</dbReference>
<dbReference type="InterPro" id="IPR046452">
    <property type="entry name" value="HgmA_N"/>
</dbReference>
<dbReference type="InterPro" id="IPR005708">
    <property type="entry name" value="Homogentis_dOase"/>
</dbReference>
<dbReference type="InterPro" id="IPR022950">
    <property type="entry name" value="Homogentis_dOase_bac"/>
</dbReference>
<dbReference type="InterPro" id="IPR014710">
    <property type="entry name" value="RmlC-like_jellyroll"/>
</dbReference>
<dbReference type="InterPro" id="IPR011051">
    <property type="entry name" value="RmlC_Cupin_sf"/>
</dbReference>
<dbReference type="NCBIfam" id="TIGR01015">
    <property type="entry name" value="hmgA"/>
    <property type="match status" value="1"/>
</dbReference>
<dbReference type="PANTHER" id="PTHR11056">
    <property type="entry name" value="HOMOGENTISATE 1,2-DIOXYGENASE"/>
    <property type="match status" value="1"/>
</dbReference>
<dbReference type="PANTHER" id="PTHR11056:SF0">
    <property type="entry name" value="HOMOGENTISATE 1,2-DIOXYGENASE"/>
    <property type="match status" value="1"/>
</dbReference>
<dbReference type="Pfam" id="PF04209">
    <property type="entry name" value="HgmA_C"/>
    <property type="match status" value="1"/>
</dbReference>
<dbReference type="Pfam" id="PF20510">
    <property type="entry name" value="HgmA_N"/>
    <property type="match status" value="1"/>
</dbReference>
<dbReference type="SUPFAM" id="SSF51182">
    <property type="entry name" value="RmlC-like cupins"/>
    <property type="match status" value="1"/>
</dbReference>
<feature type="chain" id="PRO_0000220251" description="Homogentisate 1,2-dioxygenase">
    <location>
        <begin position="1"/>
        <end position="434"/>
    </location>
</feature>
<feature type="active site" description="Proton acceptor" evidence="1">
    <location>
        <position position="289"/>
    </location>
</feature>
<feature type="binding site" evidence="1">
    <location>
        <position position="332"/>
    </location>
    <ligand>
        <name>Fe cation</name>
        <dbReference type="ChEBI" id="CHEBI:24875"/>
    </ligand>
</feature>
<feature type="binding site" evidence="1">
    <location>
        <position position="338"/>
    </location>
    <ligand>
        <name>Fe cation</name>
        <dbReference type="ChEBI" id="CHEBI:24875"/>
    </ligand>
</feature>
<feature type="binding site" evidence="1">
    <location>
        <position position="347"/>
    </location>
    <ligand>
        <name>homogentisate</name>
        <dbReference type="ChEBI" id="CHEBI:16169"/>
    </ligand>
</feature>
<feature type="binding site" evidence="1">
    <location>
        <position position="368"/>
    </location>
    <ligand>
        <name>Fe cation</name>
        <dbReference type="ChEBI" id="CHEBI:24875"/>
    </ligand>
</feature>
<feature type="binding site" evidence="1">
    <location>
        <position position="368"/>
    </location>
    <ligand>
        <name>homogentisate</name>
        <dbReference type="ChEBI" id="CHEBI:16169"/>
    </ligand>
</feature>
<keyword id="KW-0223">Dioxygenase</keyword>
<keyword id="KW-0408">Iron</keyword>
<keyword id="KW-0479">Metal-binding</keyword>
<keyword id="KW-0560">Oxidoreductase</keyword>
<keyword id="KW-0585">Phenylalanine catabolism</keyword>
<keyword id="KW-1185">Reference proteome</keyword>
<keyword id="KW-0828">Tyrosine catabolism</keyword>
<evidence type="ECO:0000255" key="1">
    <source>
        <dbReference type="HAMAP-Rule" id="MF_00334"/>
    </source>
</evidence>
<gene>
    <name evidence="1" type="primary">hmgA</name>
    <name type="ordered locus">PSPTO_3551</name>
</gene>
<name>HGD_PSESM</name>
<reference key="1">
    <citation type="journal article" date="2003" name="Proc. Natl. Acad. Sci. U.S.A.">
        <title>The complete genome sequence of the Arabidopsis and tomato pathogen Pseudomonas syringae pv. tomato DC3000.</title>
        <authorList>
            <person name="Buell C.R."/>
            <person name="Joardar V."/>
            <person name="Lindeberg M."/>
            <person name="Selengut J."/>
            <person name="Paulsen I.T."/>
            <person name="Gwinn M.L."/>
            <person name="Dodson R.J."/>
            <person name="DeBoy R.T."/>
            <person name="Durkin A.S."/>
            <person name="Kolonay J.F."/>
            <person name="Madupu R."/>
            <person name="Daugherty S.C."/>
            <person name="Brinkac L.M."/>
            <person name="Beanan M.J."/>
            <person name="Haft D.H."/>
            <person name="Nelson W.C."/>
            <person name="Davidsen T.M."/>
            <person name="Zafar N."/>
            <person name="Zhou L."/>
            <person name="Liu J."/>
            <person name="Yuan Q."/>
            <person name="Khouri H.M."/>
            <person name="Fedorova N.B."/>
            <person name="Tran B."/>
            <person name="Russell D."/>
            <person name="Berry K.J."/>
            <person name="Utterback T.R."/>
            <person name="Van Aken S.E."/>
            <person name="Feldblyum T.V."/>
            <person name="D'Ascenzo M."/>
            <person name="Deng W.-L."/>
            <person name="Ramos A.R."/>
            <person name="Alfano J.R."/>
            <person name="Cartinhour S."/>
            <person name="Chatterjee A.K."/>
            <person name="Delaney T.P."/>
            <person name="Lazarowitz S.G."/>
            <person name="Martin G.B."/>
            <person name="Schneider D.J."/>
            <person name="Tang X."/>
            <person name="Bender C.L."/>
            <person name="White O."/>
            <person name="Fraser C.M."/>
            <person name="Collmer A."/>
        </authorList>
    </citation>
    <scope>NUCLEOTIDE SEQUENCE [LARGE SCALE GENOMIC DNA]</scope>
    <source>
        <strain>ATCC BAA-871 / DC3000</strain>
    </source>
</reference>
<comment type="function">
    <text evidence="1">Involved in the catabolism of homogentisate (2,5-dihydroxyphenylacetate or 2,5-OH-PhAc), a central intermediate in the degradation of phenylalanine and tyrosine. Catalyzes the oxidative ring cleavage of the aromatic ring of homogentisate to yield maleylacetoacetate.</text>
</comment>
<comment type="catalytic activity">
    <reaction evidence="1">
        <text>homogentisate + O2 = 4-maleylacetoacetate + H(+)</text>
        <dbReference type="Rhea" id="RHEA:15449"/>
        <dbReference type="ChEBI" id="CHEBI:15378"/>
        <dbReference type="ChEBI" id="CHEBI:15379"/>
        <dbReference type="ChEBI" id="CHEBI:16169"/>
        <dbReference type="ChEBI" id="CHEBI:17105"/>
        <dbReference type="EC" id="1.13.11.5"/>
    </reaction>
</comment>
<comment type="cofactor">
    <cofactor evidence="1">
        <name>Fe cation</name>
        <dbReference type="ChEBI" id="CHEBI:24875"/>
    </cofactor>
</comment>
<comment type="pathway">
    <text evidence="1">Amino-acid degradation; L-phenylalanine degradation; acetoacetate and fumarate from L-phenylalanine: step 4/6.</text>
</comment>
<comment type="subunit">
    <text evidence="1">Hexamer; dimer of trimers.</text>
</comment>
<comment type="similarity">
    <text evidence="1">Belongs to the homogentisate dioxygenase family.</text>
</comment>